<dbReference type="EMBL" id="M75136">
    <property type="protein sequence ID" value="AAA88173.1"/>
    <property type="molecule type" value="Genomic_DNA"/>
</dbReference>
<dbReference type="PIR" id="F36793">
    <property type="entry name" value="F36793"/>
</dbReference>
<dbReference type="RefSeq" id="NP_041161.1">
    <property type="nucleotide sequence ID" value="NC_001493.2"/>
</dbReference>
<dbReference type="GeneID" id="1488395"/>
<dbReference type="KEGG" id="vg:1488395"/>
<dbReference type="Proteomes" id="UP000007643">
    <property type="component" value="Segment"/>
</dbReference>
<organism>
    <name type="scientific">Ictalurid herpesvirus 1 (strain Auburn)</name>
    <name type="common">IcHV-1</name>
    <name type="synonym">Channel catfish herpesvirus</name>
    <dbReference type="NCBI Taxonomy" id="766178"/>
    <lineage>
        <taxon>Viruses</taxon>
        <taxon>Duplodnaviria</taxon>
        <taxon>Heunggongvirae</taxon>
        <taxon>Peploviricota</taxon>
        <taxon>Herviviricetes</taxon>
        <taxon>Herpesvirales</taxon>
        <taxon>Alloherpesviridae</taxon>
        <taxon>Ictavirus</taxon>
        <taxon>Ictavirus ictaluridallo1</taxon>
        <taxon>Ictalurid herpesvirus 1</taxon>
    </lineage>
</organism>
<proteinExistence type="predicted"/>
<accession>Q00110</accession>
<gene>
    <name type="primary">ORF70</name>
</gene>
<name>VG70_ICHVA</name>
<protein>
    <recommendedName>
        <fullName>Uncharacterized protein ORF70</fullName>
    </recommendedName>
</protein>
<organismHost>
    <name type="scientific">Ictaluridae</name>
    <name type="common">bullhead catfishes</name>
    <dbReference type="NCBI Taxonomy" id="7996"/>
</organismHost>
<keyword id="KW-1185">Reference proteome</keyword>
<sequence>MDGYFKNITCEHEIICNDIRRAILDSAVEAEYSDYRLKSTMITFYSYYQHYLAIDPHCNTDVLNQTLGSNPVKLLLLTKLPCDDEMYDYISLTLGIPPHITGIWIRSWTPKTVYAAVCATEMCLAHMAPLKRIMEENPELFFEFYCVYNRIWKMNKFGEQTEQCCRGGRIMYNILLQCAQHGDPESIFYGLRGVIAFVRSTLGVHSRQLPVDIPNIDMSLLFKHFCV</sequence>
<reference key="1">
    <citation type="journal article" date="1992" name="Virology">
        <title>Channel catfish virus: a new type of herpesvirus.</title>
        <authorList>
            <person name="Davison A.J."/>
        </authorList>
    </citation>
    <scope>NUCLEOTIDE SEQUENCE [LARGE SCALE GENOMIC DNA]</scope>
</reference>
<feature type="chain" id="PRO_0000222147" description="Uncharacterized protein ORF70">
    <location>
        <begin position="1"/>
        <end position="227"/>
    </location>
</feature>